<comment type="similarity">
    <text evidence="2">Belongs to the transcriptional antiterminator BglG family. GlcT subfamily.</text>
</comment>
<protein>
    <recommendedName>
        <fullName>Protein GlcT</fullName>
    </recommendedName>
</protein>
<gene>
    <name type="primary">glcT</name>
    <name type="ordered locus">SaurJH9_1419</name>
</gene>
<feature type="chain" id="PRO_0000352604" description="Protein GlcT">
    <location>
        <begin position="1"/>
        <end position="283"/>
    </location>
</feature>
<feature type="domain" description="PRD 1" evidence="1">
    <location>
        <begin position="69"/>
        <end position="173"/>
    </location>
</feature>
<feature type="domain" description="PRD 2" evidence="1">
    <location>
        <begin position="174"/>
        <end position="283"/>
    </location>
</feature>
<accession>A5ISP0</accession>
<proteinExistence type="inferred from homology"/>
<sequence>MGEYIVTKTLNNNVVVCTNNDQEVILIGKGIGFNKKEGMALNDQTITIEKIYKLESEQQKAHYKSLVEIADDNVLQVIIDSLNFISNTAMNVDSKQLVVSLTDHIIFAYKRLKQNQVISNPFVMETMQLYSDAYHIAKQVIDQLNAALDVHFPEDEIGFIALHIASNTEDLSMHEMTLINNVIKKGIDIIESDLVTTVDKESLQYQRFIRHVQFLIRRLRRKEYIHAQDDFVSMIKNHYPICYNTAYKILTMIQKQFDVNISESEIIYLTLHIHHFEERINQS</sequence>
<name>GLCT_STAA9</name>
<reference key="1">
    <citation type="submission" date="2007-05" db="EMBL/GenBank/DDBJ databases">
        <title>Complete sequence of chromosome of Staphylococcus aureus subsp. aureus JH9.</title>
        <authorList>
            <consortium name="US DOE Joint Genome Institute"/>
            <person name="Copeland A."/>
            <person name="Lucas S."/>
            <person name="Lapidus A."/>
            <person name="Barry K."/>
            <person name="Detter J.C."/>
            <person name="Glavina del Rio T."/>
            <person name="Hammon N."/>
            <person name="Israni S."/>
            <person name="Pitluck S."/>
            <person name="Chain P."/>
            <person name="Malfatti S."/>
            <person name="Shin M."/>
            <person name="Vergez L."/>
            <person name="Schmutz J."/>
            <person name="Larimer F."/>
            <person name="Land M."/>
            <person name="Hauser L."/>
            <person name="Kyrpides N."/>
            <person name="Kim E."/>
            <person name="Tomasz A."/>
            <person name="Richardson P."/>
        </authorList>
    </citation>
    <scope>NUCLEOTIDE SEQUENCE [LARGE SCALE GENOMIC DNA]</scope>
    <source>
        <strain>JH9</strain>
    </source>
</reference>
<evidence type="ECO:0000255" key="1">
    <source>
        <dbReference type="PROSITE-ProRule" id="PRU00704"/>
    </source>
</evidence>
<evidence type="ECO:0000305" key="2"/>
<keyword id="KW-0677">Repeat</keyword>
<organism>
    <name type="scientific">Staphylococcus aureus (strain JH9)</name>
    <dbReference type="NCBI Taxonomy" id="359786"/>
    <lineage>
        <taxon>Bacteria</taxon>
        <taxon>Bacillati</taxon>
        <taxon>Bacillota</taxon>
        <taxon>Bacilli</taxon>
        <taxon>Bacillales</taxon>
        <taxon>Staphylococcaceae</taxon>
        <taxon>Staphylococcus</taxon>
    </lineage>
</organism>
<dbReference type="EMBL" id="CP000703">
    <property type="protein sequence ID" value="ABQ49213.1"/>
    <property type="molecule type" value="Genomic_DNA"/>
</dbReference>
<dbReference type="RefSeq" id="WP_000505015.1">
    <property type="nucleotide sequence ID" value="NC_009487.1"/>
</dbReference>
<dbReference type="SMR" id="A5ISP0"/>
<dbReference type="KEGG" id="saj:SaurJH9_1419"/>
<dbReference type="HOGENOM" id="CLU_078802_0_0_9"/>
<dbReference type="GO" id="GO:0003723">
    <property type="term" value="F:RNA binding"/>
    <property type="evidence" value="ECO:0007669"/>
    <property type="project" value="InterPro"/>
</dbReference>
<dbReference type="GO" id="GO:0045893">
    <property type="term" value="P:positive regulation of DNA-templated transcription"/>
    <property type="evidence" value="ECO:0007669"/>
    <property type="project" value="InterPro"/>
</dbReference>
<dbReference type="Gene3D" id="1.20.58.1950">
    <property type="match status" value="1"/>
</dbReference>
<dbReference type="Gene3D" id="1.20.890.100">
    <property type="match status" value="1"/>
</dbReference>
<dbReference type="Gene3D" id="2.30.24.10">
    <property type="entry name" value="CAT RNA-binding domain"/>
    <property type="match status" value="1"/>
</dbReference>
<dbReference type="Gene3D" id="1.10.1790.10">
    <property type="entry name" value="PRD domain"/>
    <property type="match status" value="1"/>
</dbReference>
<dbReference type="InterPro" id="IPR050661">
    <property type="entry name" value="BglG_antiterminators"/>
</dbReference>
<dbReference type="InterPro" id="IPR004341">
    <property type="entry name" value="CAT_RNA-bd_dom"/>
</dbReference>
<dbReference type="InterPro" id="IPR036650">
    <property type="entry name" value="CAT_RNA-bd_dom_sf"/>
</dbReference>
<dbReference type="InterPro" id="IPR011608">
    <property type="entry name" value="PRD"/>
</dbReference>
<dbReference type="InterPro" id="IPR036634">
    <property type="entry name" value="PRD_sf"/>
</dbReference>
<dbReference type="InterPro" id="IPR001550">
    <property type="entry name" value="Transcrpt_antitermin_CS"/>
</dbReference>
<dbReference type="NCBIfam" id="NF047357">
    <property type="entry name" value="antiterm_GlcT"/>
    <property type="match status" value="1"/>
</dbReference>
<dbReference type="PANTHER" id="PTHR30185">
    <property type="entry name" value="CRYPTIC BETA-GLUCOSIDE BGL OPERON ANTITERMINATOR"/>
    <property type="match status" value="1"/>
</dbReference>
<dbReference type="PANTHER" id="PTHR30185:SF16">
    <property type="entry name" value="PROTEIN GLCT"/>
    <property type="match status" value="1"/>
</dbReference>
<dbReference type="Pfam" id="PF03123">
    <property type="entry name" value="CAT_RBD"/>
    <property type="match status" value="1"/>
</dbReference>
<dbReference type="Pfam" id="PF00874">
    <property type="entry name" value="PRD"/>
    <property type="match status" value="2"/>
</dbReference>
<dbReference type="SMART" id="SM01061">
    <property type="entry name" value="CAT_RBD"/>
    <property type="match status" value="1"/>
</dbReference>
<dbReference type="SUPFAM" id="SSF63520">
    <property type="entry name" value="PTS-regulatory domain, PRD"/>
    <property type="match status" value="2"/>
</dbReference>
<dbReference type="SUPFAM" id="SSF50151">
    <property type="entry name" value="SacY-like RNA-binding domain"/>
    <property type="match status" value="1"/>
</dbReference>
<dbReference type="PROSITE" id="PS00654">
    <property type="entry name" value="PRD_1"/>
    <property type="match status" value="1"/>
</dbReference>
<dbReference type="PROSITE" id="PS51372">
    <property type="entry name" value="PRD_2"/>
    <property type="match status" value="2"/>
</dbReference>